<feature type="chain" id="PRO_0000339329" description="Conserved oligomeric Golgi complex subunit 6">
    <location>
        <begin position="1"/>
        <end position="799"/>
    </location>
</feature>
<name>COG6_PICST</name>
<sequence length="799" mass="91067">MDFVDFDSFSNDEITGEDNLPHPQPALSLPITSNIETIGKRISSLNTITRSLLKFEGTDEEEGESSSENASKENELAQKYAQMSLNFLKKEETQHGSDGKIANGVDGKSYNDFEHSKATLSTRLSRVLNDSLSETLLREIFSHLEDKYSSYDDSIDELIEPGVVGSMSRKKLRGKVENELIKNQSLVLKEYQPVIKQLKVVEDRLSKLNDLNKVTNDNIENKFKYSSEFNTKVKELNSEKRLINLKKNLLINFKAKFTLNEYEEFVLDSGDINDEFFTVLKKAEEINANCSILLSIENPQLGLKIMSKSNHLINRSVERIINFTNKTLSNLYSLNSKARLRTLHQCMRYLKNKLNYFSNVVNTFVDSRAKVLVDDFLSQIQGNLDSNGNVSTFKRRSSSISSETSSRPIYVSAHDPIRFIGDLLAYVHSLVVNESDTIISIFTFETSESEVEKKEFETIIKDIIDKILKSLVKPVKSKVTQIISAETKLSTSYSIFNLVELYSMMFTKQLSDTSEVSIALKSLVKASQDRLASIISNRLASIRTSNSAQLELNLDLQPPEWIIEFYSDLLPILDQTTTDTIFNFTAEENEEFMKLLVDEPIEIFFEHIGSNKIFESKKDQLILKHNFLDLILSKLLPITIVSDKVIEINEMINTLTQELTQLQLEAILKECGLYDYYNIVNMICPFSDDFFDTSIYEPIKENQLYNKSELLKINEIIQSYIPNALLDIQSSLLKLNPPSIVNEVTTNASLEFVKYYGKLSQINSAFLQETFTWSDFEIATLLGVDEDYTEFIKLVANSG</sequence>
<proteinExistence type="inferred from homology"/>
<protein>
    <recommendedName>
        <fullName>Conserved oligomeric Golgi complex subunit 6</fullName>
        <shortName>COG complex subunit 6</shortName>
    </recommendedName>
    <alternativeName>
        <fullName>Component of oligomeric Golgi complex 6</fullName>
    </alternativeName>
</protein>
<reference key="1">
    <citation type="journal article" date="2007" name="Nat. Biotechnol.">
        <title>Genome sequence of the lignocellulose-bioconverting and xylose-fermenting yeast Pichia stipitis.</title>
        <authorList>
            <person name="Jeffries T.W."/>
            <person name="Grigoriev I.V."/>
            <person name="Grimwood J."/>
            <person name="Laplaza J.M."/>
            <person name="Aerts A."/>
            <person name="Salamov A."/>
            <person name="Schmutz J."/>
            <person name="Lindquist E."/>
            <person name="Dehal P."/>
            <person name="Shapiro H."/>
            <person name="Jin Y.-S."/>
            <person name="Passoth V."/>
            <person name="Richardson P.M."/>
        </authorList>
    </citation>
    <scope>NUCLEOTIDE SEQUENCE [LARGE SCALE GENOMIC DNA]</scope>
    <source>
        <strain>ATCC 58785 / CBS 6054 / NBRC 10063 / NRRL Y-11545</strain>
    </source>
</reference>
<accession>A3LT37</accession>
<organism>
    <name type="scientific">Scheffersomyces stipitis (strain ATCC 58785 / CBS 6054 / NBRC 10063 / NRRL Y-11545)</name>
    <name type="common">Yeast</name>
    <name type="synonym">Pichia stipitis</name>
    <dbReference type="NCBI Taxonomy" id="322104"/>
    <lineage>
        <taxon>Eukaryota</taxon>
        <taxon>Fungi</taxon>
        <taxon>Dikarya</taxon>
        <taxon>Ascomycota</taxon>
        <taxon>Saccharomycotina</taxon>
        <taxon>Pichiomycetes</taxon>
        <taxon>Debaryomycetaceae</taxon>
        <taxon>Scheffersomyces</taxon>
    </lineage>
</organism>
<gene>
    <name type="primary">COG6</name>
    <name type="ORF">PICST_45600</name>
</gene>
<evidence type="ECO:0000250" key="1"/>
<evidence type="ECO:0000305" key="2"/>
<dbReference type="EMBL" id="CP000498">
    <property type="protein sequence ID" value="ABN66000.2"/>
    <property type="molecule type" value="Genomic_DNA"/>
</dbReference>
<dbReference type="RefSeq" id="XP_001384029.2">
    <property type="nucleotide sequence ID" value="XM_001383992.1"/>
</dbReference>
<dbReference type="SMR" id="A3LT37"/>
<dbReference type="FunCoup" id="A3LT37">
    <property type="interactions" value="272"/>
</dbReference>
<dbReference type="STRING" id="322104.A3LT37"/>
<dbReference type="GeneID" id="4838816"/>
<dbReference type="KEGG" id="pic:PICST_45600"/>
<dbReference type="eggNOG" id="KOG3758">
    <property type="taxonomic scope" value="Eukaryota"/>
</dbReference>
<dbReference type="HOGENOM" id="CLU_017837_0_0_1"/>
<dbReference type="InParanoid" id="A3LT37"/>
<dbReference type="OMA" id="IINMICP"/>
<dbReference type="OrthoDB" id="272987at2759"/>
<dbReference type="Proteomes" id="UP000002258">
    <property type="component" value="Chromosome 4"/>
</dbReference>
<dbReference type="GO" id="GO:0000139">
    <property type="term" value="C:Golgi membrane"/>
    <property type="evidence" value="ECO:0007669"/>
    <property type="project" value="UniProtKB-SubCell"/>
</dbReference>
<dbReference type="GO" id="GO:0017119">
    <property type="term" value="C:Golgi transport complex"/>
    <property type="evidence" value="ECO:0007669"/>
    <property type="project" value="InterPro"/>
</dbReference>
<dbReference type="GO" id="GO:0006891">
    <property type="term" value="P:intra-Golgi vesicle-mediated transport"/>
    <property type="evidence" value="ECO:0007669"/>
    <property type="project" value="InterPro"/>
</dbReference>
<dbReference type="GO" id="GO:0015031">
    <property type="term" value="P:protein transport"/>
    <property type="evidence" value="ECO:0007669"/>
    <property type="project" value="UniProtKB-KW"/>
</dbReference>
<dbReference type="InterPro" id="IPR010490">
    <property type="entry name" value="COG6"/>
</dbReference>
<dbReference type="InterPro" id="IPR048369">
    <property type="entry name" value="COG6_C"/>
</dbReference>
<dbReference type="InterPro" id="IPR048368">
    <property type="entry name" value="COG6_N"/>
</dbReference>
<dbReference type="PANTHER" id="PTHR21506">
    <property type="entry name" value="COMPONENT OF OLIGOMERIC GOLGI COMPLEX 6"/>
    <property type="match status" value="1"/>
</dbReference>
<dbReference type="PANTHER" id="PTHR21506:SF0">
    <property type="entry name" value="CONSERVED OLIGOMERIC GOLGI COMPLEX SUBUNIT 6"/>
    <property type="match status" value="1"/>
</dbReference>
<dbReference type="Pfam" id="PF20653">
    <property type="entry name" value="COG6_C"/>
    <property type="match status" value="1"/>
</dbReference>
<dbReference type="Pfam" id="PF06419">
    <property type="entry name" value="COG6_N"/>
    <property type="match status" value="1"/>
</dbReference>
<dbReference type="SMART" id="SM01087">
    <property type="entry name" value="COG6"/>
    <property type="match status" value="1"/>
</dbReference>
<comment type="function">
    <text evidence="1">Acts as a component of the peripheral membrane COG complex that is involved in intra-Golgi protein trafficking. COG is located at the cis-Golgi, and regulates tethering of retrograde intra-Golgi vesicles and possibly a number of other membrane trafficking events (By similarity).</text>
</comment>
<comment type="subcellular location">
    <subcellularLocation>
        <location evidence="1">Golgi apparatus membrane</location>
        <topology evidence="1">Peripheral membrane protein</topology>
    </subcellularLocation>
</comment>
<comment type="similarity">
    <text evidence="2">Belongs to the COG6 family.</text>
</comment>
<keyword id="KW-0333">Golgi apparatus</keyword>
<keyword id="KW-0472">Membrane</keyword>
<keyword id="KW-0653">Protein transport</keyword>
<keyword id="KW-1185">Reference proteome</keyword>
<keyword id="KW-0813">Transport</keyword>